<proteinExistence type="evidence at protein level"/>
<sequence>MKKSLIALTTALSFGLAAAQTAAPVSAPQVPALTDVPAGHWAKDAIDRLVSRGVILGYPDGTFRGTQNLTRYEAAIIIARLLDQMRDGETPAGMTAEDMTALQNAIQELAADLAALGVRVSDLEANAVSKDDFARLEARIEEVAAAGGEQGATEALQGQIDDLTARVDEYDALRADVDDNASSIAALNDLTVLLNQDILDLQDRVSAVEAAQADFVQRSDFDALGGRVTTVETRVETVNNSLTGRIAALERNAFSVKPSLTIGYSVSRTSRNFDVDRLFPLNADGTVANNAFTSGGIDTDTGAQRRDFGDFGNASDPVVAGAAGLYGFADGVSYTVYFTDGSTATFDGLNPADYKVPTGKVIDTTKGRNGFGFNNLARYKEGSTDIGISLGFDTSGQFSQVTSGTGGSLFSTAGRLQVNQIDLNFGLVTGLPSDAYVDTNGNGKKDDGEATGRGTYLGSGGTAAILRDPAGNVYRPVFFRFKNATTQFSVGNNPVIVTLGQQQKFYFSDYVFDNNYDGRGDGFTVTVDGSNVPVIGAWKPQIKGVYGSRSGLDGTAEAGYGVYYRGVRAQITPVGTLTAGIHYAQEGRDMFGAAQNTTSTPSDVTTYGADLHGKAFGVELHSEYATSRVRPNTANAAVQTSNAFYARVATRKDNLAFDLNTPAAKFGNDTFGVSLYDLNYRKIDAGYNNVAGISEYGYGSYSRTSAQNIAYNPDTGVTAPFANLDRQAYTDANNDGTSDRNADGTVVATNTKIGQMGFGVKAAANLGPVAIGGYYDTSTGANGDNANRMTEAGGSAKVAYSIFSLRGTYNTLDSNRPQIYRDAAGTQIIGDAKVRRYAVQADVTPGLGLFVGAYYRDVNVNGVRSTTDRGLLGRGYLASSFEPGVGNNAYRTGLRCADNNFGTGTRDIDGVGGVLNPAVNLDQSRTATCFTSYGVEAGHAGDNANALVKDLFFRVGYSRVYVPTTATATTGDFSGSVTYGDARYDRKVGVANVRLAGSFSTTNTQLDSRPAGTRGAVGLIVRTDPLENVPFRPQFNGQVGYYTADNRVAAGNYNANATKYGAGVVLNDFLLPQTKIGVRYDGYMAQNRQYTPFDGDGTQGYFSDANNNRRTNLNGVYVEGAYQDLIFSYGTYTLSQKDLNGVEYGSGINNGQPARGQTFKISYKVNF</sequence>
<keyword id="KW-0002">3D-structure</keyword>
<keyword id="KW-0998">Cell outer membrane</keyword>
<keyword id="KW-0186">Copper</keyword>
<keyword id="KW-0406">Ion transport</keyword>
<keyword id="KW-0408">Iron</keyword>
<keyword id="KW-0446">Lipid-binding</keyword>
<keyword id="KW-0472">Membrane</keyword>
<keyword id="KW-0626">Porin</keyword>
<keyword id="KW-1185">Reference proteome</keyword>
<keyword id="KW-0732">Signal</keyword>
<keyword id="KW-0812">Transmembrane</keyword>
<keyword id="KW-1134">Transmembrane beta strand</keyword>
<keyword id="KW-0813">Transport</keyword>
<evidence type="ECO:0000255" key="1"/>
<evidence type="ECO:0000255" key="2">
    <source>
        <dbReference type="PROSITE-ProRule" id="PRU00777"/>
    </source>
</evidence>
<evidence type="ECO:0000269" key="3">
    <source>
    </source>
</evidence>
<evidence type="ECO:0000269" key="4">
    <source>
    </source>
</evidence>
<evidence type="ECO:0000269" key="5">
    <source>
    </source>
</evidence>
<evidence type="ECO:0000269" key="6">
    <source>
    </source>
</evidence>
<evidence type="ECO:0000269" key="7">
    <source>
    </source>
</evidence>
<evidence type="ECO:0000269" key="8">
    <source>
    </source>
</evidence>
<evidence type="ECO:0000269" key="9">
    <source>
    </source>
</evidence>
<evidence type="ECO:0000303" key="10">
    <source>
    </source>
</evidence>
<evidence type="ECO:0000303" key="11">
    <source>
    </source>
</evidence>
<evidence type="ECO:0000305" key="12"/>
<evidence type="ECO:0000305" key="13">
    <source>
    </source>
</evidence>
<evidence type="ECO:0000305" key="14">
    <source>
    </source>
</evidence>
<evidence type="ECO:0000305" key="15">
    <source>
    </source>
</evidence>
<evidence type="ECO:0000312" key="16">
    <source>
        <dbReference type="EMBL" id="AAF12114.1"/>
    </source>
</evidence>
<evidence type="ECO:0007744" key="17">
    <source>
        <dbReference type="PDB" id="7ZGX"/>
    </source>
</evidence>
<evidence type="ECO:0007744" key="18">
    <source>
        <dbReference type="PDB" id="7ZGY"/>
    </source>
</evidence>
<evidence type="ECO:0007744" key="19">
    <source>
        <dbReference type="PDB" id="8AE1"/>
    </source>
</evidence>
<evidence type="ECO:0007829" key="20">
    <source>
        <dbReference type="PDB" id="8AE1"/>
    </source>
</evidence>
<organism>
    <name type="scientific">Deinococcus radiodurans (strain ATCC 13939 / DSM 20539 / JCM 16871 / CCUG 27074 / LMG 4051 / NBRC 15346 / NCIMB 9279 / VKM B-1422 / R1)</name>
    <dbReference type="NCBI Taxonomy" id="243230"/>
    <lineage>
        <taxon>Bacteria</taxon>
        <taxon>Thermotogati</taxon>
        <taxon>Deinococcota</taxon>
        <taxon>Deinococci</taxon>
        <taxon>Deinococcales</taxon>
        <taxon>Deinococcaceae</taxon>
        <taxon>Deinococcus</taxon>
    </lineage>
</organism>
<feature type="signal peptide" evidence="1">
    <location>
        <begin position="1"/>
        <end position="22"/>
    </location>
</feature>
<feature type="chain" id="PRO_5004333117" description="Outer membrane protein SlpA">
    <location>
        <begin position="23"/>
        <end position="1167"/>
    </location>
</feature>
<feature type="topological domain" description="Periplasmic" evidence="12">
    <location>
        <begin position="23"/>
        <end position="254"/>
    </location>
</feature>
<feature type="transmembrane region" description="Beta stranded" evidence="9">
    <location>
        <begin position="255"/>
        <end position="268"/>
    </location>
</feature>
<feature type="topological domain" description="Extracellular" evidence="12">
    <location>
        <begin position="269"/>
        <end position="377"/>
    </location>
</feature>
<feature type="transmembrane region" description="Beta stranded" evidence="9">
    <location>
        <begin position="378"/>
        <end position="403"/>
    </location>
</feature>
<feature type="topological domain" description="Periplasmic" evidence="12">
    <location>
        <begin position="404"/>
        <end position="416"/>
    </location>
</feature>
<feature type="transmembrane region" description="Beta stranded" evidence="9">
    <location>
        <begin position="417"/>
        <end position="428"/>
    </location>
</feature>
<feature type="topological domain" description="Extracellular" evidence="12">
    <location>
        <begin position="429"/>
        <end position="471"/>
    </location>
</feature>
<feature type="transmembrane region" description="Beta stranded" evidence="9">
    <location>
        <begin position="472"/>
        <end position="490"/>
    </location>
</feature>
<feature type="topological domain" description="Periplasmic" evidence="12">
    <location>
        <begin position="491"/>
        <end position="494"/>
    </location>
</feature>
<feature type="transmembrane region" description="Beta stranded" evidence="9">
    <location>
        <begin position="495"/>
        <end position="500"/>
    </location>
</feature>
<feature type="topological domain" description="Extracellular" evidence="12">
    <location>
        <begin position="501"/>
        <end position="519"/>
    </location>
</feature>
<feature type="transmembrane region" description="Beta stranded" evidence="9">
    <location>
        <begin position="520"/>
        <end position="528"/>
    </location>
</feature>
<feature type="topological domain" description="Periplasmic" evidence="12">
    <location>
        <begin position="529"/>
        <end position="540"/>
    </location>
</feature>
<feature type="transmembrane region" description="Beta stranded" evidence="9">
    <location>
        <begin position="541"/>
        <end position="549"/>
    </location>
</feature>
<feature type="topological domain" description="Extracellular" evidence="12">
    <location>
        <begin position="550"/>
        <end position="561"/>
    </location>
</feature>
<feature type="transmembrane region" description="Beta stranded" evidence="9">
    <location>
        <begin position="562"/>
        <end position="571"/>
    </location>
</feature>
<feature type="topological domain" description="Periplasmic" evidence="12">
    <location>
        <begin position="572"/>
        <end position="577"/>
    </location>
</feature>
<feature type="transmembrane region" description="Beta stranded" evidence="9">
    <location>
        <begin position="578"/>
        <end position="588"/>
    </location>
</feature>
<feature type="topological domain" description="Extracellular" evidence="12">
    <location>
        <begin position="589"/>
        <end position="601"/>
    </location>
</feature>
<feature type="transmembrane region" description="Beta stranded" evidence="9">
    <location>
        <begin position="602"/>
        <end position="615"/>
    </location>
</feature>
<feature type="topological domain" description="Periplasmic" evidence="12">
    <location>
        <begin position="616"/>
        <end position="617"/>
    </location>
</feature>
<feature type="transmembrane region" description="Beta stranded" evidence="9">
    <location>
        <begin position="618"/>
        <end position="630"/>
    </location>
</feature>
<feature type="topological domain" description="Extracellular" evidence="12">
    <location>
        <begin position="631"/>
        <end position="638"/>
    </location>
</feature>
<feature type="transmembrane region" description="Beta stranded" evidence="9">
    <location>
        <begin position="639"/>
        <end position="649"/>
    </location>
</feature>
<feature type="topological domain" description="Periplasmic" evidence="12">
    <location>
        <begin position="650"/>
        <end position="670"/>
    </location>
</feature>
<feature type="transmembrane region" description="Beta stranded" evidence="9">
    <location>
        <begin position="671"/>
        <end position="682"/>
    </location>
</feature>
<feature type="topological domain" description="Extracellular" evidence="12">
    <location>
        <begin position="683"/>
        <end position="753"/>
    </location>
</feature>
<feature type="transmembrane region" description="Beta stranded" evidence="9">
    <location>
        <begin position="754"/>
        <end position="766"/>
    </location>
</feature>
<feature type="topological domain" description="Periplasmic" evidence="12">
    <location>
        <begin position="767"/>
        <end position="768"/>
    </location>
</feature>
<feature type="transmembrane region" description="Beta stranded" evidence="9">
    <location>
        <begin position="769"/>
        <end position="779"/>
    </location>
</feature>
<feature type="topological domain" description="Extracellular" evidence="12">
    <location>
        <begin position="780"/>
        <end position="788"/>
    </location>
</feature>
<feature type="transmembrane region" description="Beta stranded" evidence="9">
    <location>
        <begin position="789"/>
        <end position="798"/>
    </location>
</feature>
<feature type="topological domain" description="Periplasmic" evidence="12">
    <location>
        <begin position="799"/>
        <end position="802"/>
    </location>
</feature>
<feature type="transmembrane region" description="Beta stranded" evidence="9">
    <location>
        <begin position="803"/>
        <end position="814"/>
    </location>
</feature>
<feature type="topological domain" description="Extracellular" evidence="12">
    <location>
        <begin position="815"/>
        <end position="831"/>
    </location>
</feature>
<feature type="transmembrane region" description="Beta stranded" evidence="9">
    <location>
        <begin position="832"/>
        <end position="843"/>
    </location>
</feature>
<feature type="topological domain" description="Periplasmic" evidence="12">
    <location>
        <begin position="844"/>
        <end position="848"/>
    </location>
</feature>
<feature type="transmembrane region" description="Beta stranded" evidence="9">
    <location>
        <begin position="849"/>
        <end position="860"/>
    </location>
</feature>
<feature type="topological domain" description="Extracellular" evidence="12">
    <location>
        <begin position="861"/>
        <end position="931"/>
    </location>
</feature>
<feature type="transmembrane region" description="Beta stranded" evidence="9">
    <location>
        <begin position="932"/>
        <end position="940"/>
    </location>
</feature>
<feature type="topological domain" description="Periplasmic" evidence="12">
    <location>
        <begin position="941"/>
        <end position="949"/>
    </location>
</feature>
<feature type="transmembrane region" description="Beta stranded" evidence="9">
    <location>
        <begin position="950"/>
        <end position="960"/>
    </location>
</feature>
<feature type="topological domain" description="Extracellular" evidence="12">
    <location>
        <begin position="961"/>
        <end position="976"/>
    </location>
</feature>
<feature type="transmembrane region" description="Beta stranded" evidence="9">
    <location>
        <begin position="977"/>
        <end position="988"/>
    </location>
</feature>
<feature type="topological domain" description="Periplasmic" evidence="12">
    <location>
        <begin position="989"/>
        <end position="990"/>
    </location>
</feature>
<feature type="transmembrane region" description="Beta stranded" evidence="9">
    <location>
        <begin position="991"/>
        <end position="1002"/>
    </location>
</feature>
<feature type="topological domain" description="Extracellular" evidence="12">
    <location>
        <begin position="1003"/>
        <end position="1014"/>
    </location>
</feature>
<feature type="transmembrane region" description="Beta stranded" evidence="9">
    <location>
        <begin position="1015"/>
        <end position="1023"/>
    </location>
</feature>
<feature type="topological domain" description="Periplasmic" evidence="12">
    <location>
        <begin position="1024"/>
        <end position="1032"/>
    </location>
</feature>
<feature type="transmembrane region" description="Beta stranded" evidence="9">
    <location>
        <begin position="1033"/>
        <end position="1046"/>
    </location>
</feature>
<feature type="topological domain" description="Extracellular" evidence="12">
    <location>
        <begin position="1047"/>
        <end position="1052"/>
    </location>
</feature>
<feature type="transmembrane region" description="Beta stranded" evidence="9">
    <location>
        <begin position="1053"/>
        <end position="1066"/>
    </location>
</feature>
<feature type="topological domain" description="Periplasmic" evidence="12">
    <location>
        <begin position="1067"/>
        <end position="1073"/>
    </location>
</feature>
<feature type="transmembrane region" description="Beta stranded" evidence="9">
    <location>
        <begin position="1074"/>
        <end position="1086"/>
    </location>
</feature>
<feature type="topological domain" description="Extracellular" evidence="12">
    <location>
        <begin position="1087"/>
        <end position="1108"/>
    </location>
</feature>
<feature type="transmembrane region" description="Beta stranded" evidence="9">
    <location>
        <begin position="1109"/>
        <end position="1122"/>
    </location>
</feature>
<feature type="topological domain" description="Periplasmic" evidence="12">
    <location>
        <begin position="1123"/>
        <end position="1124"/>
    </location>
</feature>
<feature type="transmembrane region" description="Beta stranded" evidence="9">
    <location>
        <begin position="1125"/>
        <end position="1138"/>
    </location>
</feature>
<feature type="topological domain" description="Extracellular" evidence="12">
    <location>
        <begin position="1139"/>
        <end position="1153"/>
    </location>
</feature>
<feature type="transmembrane region" description="Beta stranded" evidence="9">
    <location>
        <begin position="1154"/>
        <end position="1166"/>
    </location>
</feature>
<feature type="topological domain" description="Periplasmic" evidence="12">
    <location>
        <position position="1167"/>
    </location>
</feature>
<feature type="domain" description="SLH" evidence="2">
    <location>
        <begin position="29"/>
        <end position="92"/>
    </location>
</feature>
<feature type="binding site" evidence="8 18">
    <location>
        <position position="274"/>
    </location>
    <ligand>
        <name>Cu(2+)</name>
        <dbReference type="ChEBI" id="CHEBI:29036"/>
        <label>1</label>
    </ligand>
</feature>
<feature type="binding site" evidence="8 18">
    <location>
        <position position="276"/>
    </location>
    <ligand>
        <name>Cu(2+)</name>
        <dbReference type="ChEBI" id="CHEBI:29036"/>
        <label>1</label>
    </ligand>
</feature>
<feature type="binding site" evidence="8 18">
    <location>
        <position position="305"/>
    </location>
    <ligand>
        <name>Cu(2+)</name>
        <dbReference type="ChEBI" id="CHEBI:29036"/>
        <label>1</label>
    </ligand>
</feature>
<feature type="binding site" evidence="8 18">
    <location>
        <position position="308"/>
    </location>
    <ligand>
        <name>Cu(2+)</name>
        <dbReference type="ChEBI" id="CHEBI:29036"/>
        <label>1</label>
    </ligand>
</feature>
<feature type="binding site" evidence="8 18">
    <location>
        <position position="310"/>
    </location>
    <ligand>
        <name>Cu(2+)</name>
        <dbReference type="ChEBI" id="CHEBI:29036"/>
        <label>1</label>
    </ligand>
</feature>
<feature type="binding site" evidence="8 18">
    <location>
        <position position="381"/>
    </location>
    <ligand>
        <name>Cu(2+)</name>
        <dbReference type="ChEBI" id="CHEBI:29036"/>
        <label>2</label>
    </ligand>
</feature>
<feature type="binding site" evidence="8 18">
    <location>
        <position position="438"/>
    </location>
    <ligand>
        <name>Fe(3+)</name>
        <dbReference type="ChEBI" id="CHEBI:29034"/>
    </ligand>
</feature>
<feature type="binding site" evidence="8 18">
    <location>
        <position position="442"/>
    </location>
    <ligand>
        <name>Fe(3+)</name>
        <dbReference type="ChEBI" id="CHEBI:29034"/>
    </ligand>
</feature>
<feature type="binding site" evidence="8 18">
    <location>
        <position position="444"/>
    </location>
    <ligand>
        <name>Fe(3+)</name>
        <dbReference type="ChEBI" id="CHEBI:29034"/>
    </ligand>
</feature>
<feature type="binding site" evidence="8 18">
    <location>
        <position position="446"/>
    </location>
    <ligand>
        <name>Fe(3+)</name>
        <dbReference type="ChEBI" id="CHEBI:29034"/>
    </ligand>
</feature>
<feature type="binding site" evidence="8 18">
    <location>
        <position position="449"/>
    </location>
    <ligand>
        <name>Fe(3+)</name>
        <dbReference type="ChEBI" id="CHEBI:29034"/>
    </ligand>
</feature>
<feature type="binding site" evidence="8 18">
    <location>
        <position position="513"/>
    </location>
    <ligand>
        <name>Cu(2+)</name>
        <dbReference type="ChEBI" id="CHEBI:29036"/>
        <label>3</label>
    </ligand>
</feature>
<feature type="binding site" evidence="8 18">
    <location>
        <position position="515"/>
    </location>
    <ligand>
        <name>Cu(2+)</name>
        <dbReference type="ChEBI" id="CHEBI:29036"/>
        <label>3</label>
    </ligand>
</feature>
<feature type="binding site" evidence="8 18">
    <location>
        <position position="549"/>
    </location>
    <ligand>
        <name>Cu(2+)</name>
        <dbReference type="ChEBI" id="CHEBI:29036"/>
        <label>2</label>
    </ligand>
</feature>
<feature type="binding site" evidence="8 18">
    <location>
        <position position="551"/>
    </location>
    <ligand>
        <name>Cu(2+)</name>
        <dbReference type="ChEBI" id="CHEBI:29036"/>
        <label>2</label>
    </ligand>
</feature>
<feature type="binding site" evidence="8 18">
    <location>
        <position position="553"/>
    </location>
    <ligand>
        <name>Cu(2+)</name>
        <dbReference type="ChEBI" id="CHEBI:29036"/>
        <label>2</label>
    </ligand>
</feature>
<feature type="binding site" evidence="8 18">
    <location>
        <position position="559"/>
    </location>
    <ligand>
        <name>Cu(2+)</name>
        <dbReference type="ChEBI" id="CHEBI:29036"/>
        <label>2</label>
    </ligand>
</feature>
<feature type="binding site" evidence="8 18">
    <location>
        <position position="622"/>
    </location>
    <ligand>
        <name>deinoxanthin</name>
        <dbReference type="ChEBI" id="CHEBI:80464"/>
    </ligand>
</feature>
<feature type="binding site" evidence="8 18">
    <location>
        <position position="716"/>
    </location>
    <ligand>
        <name>Cu(2+)</name>
        <dbReference type="ChEBI" id="CHEBI:29036"/>
        <label>3</label>
    </ligand>
</feature>
<feature type="helix" evidence="20">
    <location>
        <begin position="218"/>
        <end position="251"/>
    </location>
</feature>
<feature type="strand" evidence="20">
    <location>
        <begin position="254"/>
        <end position="256"/>
    </location>
</feature>
<feature type="strand" evidence="20">
    <location>
        <begin position="259"/>
        <end position="271"/>
    </location>
</feature>
<feature type="turn" evidence="20">
    <location>
        <begin position="299"/>
        <end position="302"/>
    </location>
</feature>
<feature type="helix" evidence="20">
    <location>
        <begin position="305"/>
        <end position="307"/>
    </location>
</feature>
<feature type="strand" evidence="20">
    <location>
        <begin position="311"/>
        <end position="314"/>
    </location>
</feature>
<feature type="helix" evidence="20">
    <location>
        <begin position="322"/>
        <end position="324"/>
    </location>
</feature>
<feature type="turn" evidence="20">
    <location>
        <begin position="325"/>
        <end position="328"/>
    </location>
</feature>
<feature type="strand" evidence="20">
    <location>
        <begin position="334"/>
        <end position="338"/>
    </location>
</feature>
<feature type="turn" evidence="20">
    <location>
        <begin position="339"/>
        <end position="341"/>
    </location>
</feature>
<feature type="strand" evidence="20">
    <location>
        <begin position="342"/>
        <end position="346"/>
    </location>
</feature>
<feature type="helix" evidence="20">
    <location>
        <begin position="351"/>
        <end position="353"/>
    </location>
</feature>
<feature type="turn" evidence="20">
    <location>
        <begin position="365"/>
        <end position="367"/>
    </location>
</feature>
<feature type="strand" evidence="20">
    <location>
        <begin position="371"/>
        <end position="373"/>
    </location>
</feature>
<feature type="strand" evidence="20">
    <location>
        <begin position="378"/>
        <end position="384"/>
    </location>
</feature>
<feature type="strand" evidence="20">
    <location>
        <begin position="387"/>
        <end position="389"/>
    </location>
</feature>
<feature type="strand" evidence="20">
    <location>
        <begin position="391"/>
        <end position="394"/>
    </location>
</feature>
<feature type="strand" evidence="20">
    <location>
        <begin position="400"/>
        <end position="403"/>
    </location>
</feature>
<feature type="strand" evidence="20">
    <location>
        <begin position="408"/>
        <end position="410"/>
    </location>
</feature>
<feature type="strand" evidence="20">
    <location>
        <begin position="418"/>
        <end position="420"/>
    </location>
</feature>
<feature type="strand" evidence="20">
    <location>
        <begin position="426"/>
        <end position="430"/>
    </location>
</feature>
<feature type="strand" evidence="20">
    <location>
        <begin position="436"/>
        <end position="444"/>
    </location>
</feature>
<feature type="helix" evidence="20">
    <location>
        <begin position="452"/>
        <end position="455"/>
    </location>
</feature>
<feature type="strand" evidence="20">
    <location>
        <begin position="459"/>
        <end position="467"/>
    </location>
</feature>
<feature type="strand" evidence="20">
    <location>
        <begin position="473"/>
        <end position="476"/>
    </location>
</feature>
<feature type="strand" evidence="20">
    <location>
        <begin position="478"/>
        <end position="481"/>
    </location>
</feature>
<feature type="strand" evidence="20">
    <location>
        <begin position="488"/>
        <end position="490"/>
    </location>
</feature>
<feature type="strand" evidence="20">
    <location>
        <begin position="493"/>
        <end position="502"/>
    </location>
</feature>
<feature type="strand" evidence="20">
    <location>
        <begin position="505"/>
        <end position="507"/>
    </location>
</feature>
<feature type="strand" evidence="20">
    <location>
        <begin position="509"/>
        <end position="514"/>
    </location>
</feature>
<feature type="strand" evidence="20">
    <location>
        <begin position="520"/>
        <end position="528"/>
    </location>
</feature>
<feature type="turn" evidence="20">
    <location>
        <begin position="533"/>
        <end position="537"/>
    </location>
</feature>
<feature type="strand" evidence="20">
    <location>
        <begin position="541"/>
        <end position="549"/>
    </location>
</feature>
<feature type="turn" evidence="20">
    <location>
        <begin position="558"/>
        <end position="561"/>
    </location>
</feature>
<feature type="strand" evidence="20">
    <location>
        <begin position="562"/>
        <end position="571"/>
    </location>
</feature>
<feature type="strand" evidence="20">
    <location>
        <begin position="578"/>
        <end position="588"/>
    </location>
</feature>
<feature type="helix" evidence="20">
    <location>
        <begin position="592"/>
        <end position="595"/>
    </location>
</feature>
<feature type="strand" evidence="20">
    <location>
        <begin position="602"/>
        <end position="615"/>
    </location>
</feature>
<feature type="strand" evidence="20">
    <location>
        <begin position="618"/>
        <end position="630"/>
    </location>
</feature>
<feature type="strand" evidence="20">
    <location>
        <begin position="639"/>
        <end position="647"/>
    </location>
</feature>
<feature type="strand" evidence="20">
    <location>
        <begin position="659"/>
        <end position="661"/>
    </location>
</feature>
<feature type="strand" evidence="20">
    <location>
        <begin position="669"/>
        <end position="683"/>
    </location>
</feature>
<feature type="helix" evidence="20">
    <location>
        <begin position="689"/>
        <end position="692"/>
    </location>
</feature>
<feature type="strand" evidence="20">
    <location>
        <begin position="703"/>
        <end position="706"/>
    </location>
</feature>
<feature type="turn" evidence="20">
    <location>
        <begin position="713"/>
        <end position="716"/>
    </location>
</feature>
<feature type="strand" evidence="20">
    <location>
        <begin position="725"/>
        <end position="729"/>
    </location>
</feature>
<feature type="strand" evidence="20">
    <location>
        <begin position="735"/>
        <end position="737"/>
    </location>
</feature>
<feature type="strand" evidence="20">
    <location>
        <begin position="748"/>
        <end position="752"/>
    </location>
</feature>
<feature type="strand" evidence="20">
    <location>
        <begin position="755"/>
        <end position="766"/>
    </location>
</feature>
<feature type="strand" evidence="20">
    <location>
        <begin position="769"/>
        <end position="778"/>
    </location>
</feature>
<feature type="helix" evidence="20">
    <location>
        <begin position="785"/>
        <end position="787"/>
    </location>
</feature>
<feature type="strand" evidence="20">
    <location>
        <begin position="789"/>
        <end position="798"/>
    </location>
</feature>
<feature type="strand" evidence="20">
    <location>
        <begin position="804"/>
        <end position="821"/>
    </location>
</feature>
<feature type="strand" evidence="20">
    <location>
        <begin position="823"/>
        <end position="825"/>
    </location>
</feature>
<feature type="strand" evidence="20">
    <location>
        <begin position="827"/>
        <end position="843"/>
    </location>
</feature>
<feature type="strand" evidence="20">
    <location>
        <begin position="849"/>
        <end position="860"/>
    </location>
</feature>
<feature type="helix" evidence="20">
    <location>
        <begin position="871"/>
        <end position="874"/>
    </location>
</feature>
<feature type="strand" evidence="20">
    <location>
        <begin position="883"/>
        <end position="886"/>
    </location>
</feature>
<feature type="strand" evidence="20">
    <location>
        <begin position="891"/>
        <end position="893"/>
    </location>
</feature>
<feature type="strand" evidence="20">
    <location>
        <begin position="907"/>
        <end position="913"/>
    </location>
</feature>
<feature type="helix" evidence="20">
    <location>
        <begin position="921"/>
        <end position="923"/>
    </location>
</feature>
<feature type="strand" evidence="20">
    <location>
        <begin position="932"/>
        <end position="940"/>
    </location>
</feature>
<feature type="strand" evidence="20">
    <location>
        <begin position="943"/>
        <end position="945"/>
    </location>
</feature>
<feature type="strand" evidence="20">
    <location>
        <begin position="951"/>
        <end position="960"/>
    </location>
</feature>
<feature type="strand" evidence="20">
    <location>
        <begin position="962"/>
        <end position="965"/>
    </location>
</feature>
<feature type="strand" evidence="20">
    <location>
        <begin position="977"/>
        <end position="988"/>
    </location>
</feature>
<feature type="strand" evidence="20">
    <location>
        <begin position="991"/>
        <end position="1004"/>
    </location>
</feature>
<feature type="strand" evidence="20">
    <location>
        <begin position="1014"/>
        <end position="1023"/>
    </location>
</feature>
<feature type="strand" evidence="20">
    <location>
        <begin position="1029"/>
        <end position="1031"/>
    </location>
</feature>
<feature type="strand" evidence="20">
    <location>
        <begin position="1033"/>
        <end position="1046"/>
    </location>
</feature>
<feature type="strand" evidence="20">
    <location>
        <begin position="1053"/>
        <end position="1068"/>
    </location>
</feature>
<feature type="strand" evidence="20">
    <location>
        <begin position="1074"/>
        <end position="1091"/>
    </location>
</feature>
<feature type="strand" evidence="20">
    <location>
        <begin position="1101"/>
        <end position="1104"/>
    </location>
</feature>
<feature type="strand" evidence="20">
    <location>
        <begin position="1109"/>
        <end position="1122"/>
    </location>
</feature>
<feature type="strand" evidence="20">
    <location>
        <begin position="1125"/>
        <end position="1138"/>
    </location>
</feature>
<feature type="strand" evidence="20">
    <location>
        <begin position="1145"/>
        <end position="1151"/>
    </location>
</feature>
<feature type="strand" evidence="20">
    <location>
        <begin position="1154"/>
        <end position="1163"/>
    </location>
</feature>
<comment type="function">
    <text evidence="3 5 6 7 8 9">Plays an important role in the structural organization and integrity of the cell envelope, bridging the outer membrane to the peptidoglyan layer (PubMed:16946272, PubMed:26074883, PubMed:35943982). Is a highly abundant molecule in the D.radiodurans cell envelope but is not a fundamental component of the S-layer (PubMed:35943982). Binds the carotenoid deinoxanthin, a strong protective antioxidant specific of this bacterium, and could be part of the first lane of defense against UV radiation, especially under desiccation (PubMed:26909071). Appears to be a nonselective channel (PubMed:32071085). Is able to transport charged amino acids such as Lys, Arg and Glu; the large dimension of the pore points toward the physiological importance of the SDBC complex in assisting and allowing the exchange of substances, including nutrients, with the surrounding environment (PubMed:35577074).</text>
</comment>
<comment type="catalytic activity">
    <reaction evidence="8">
        <text>L-arginine(in) = L-arginine(out)</text>
        <dbReference type="Rhea" id="RHEA:32143"/>
        <dbReference type="ChEBI" id="CHEBI:32682"/>
    </reaction>
</comment>
<comment type="catalytic activity">
    <reaction evidence="8">
        <text>L-lysine(in) = L-lysine(out)</text>
        <dbReference type="Rhea" id="RHEA:70935"/>
        <dbReference type="ChEBI" id="CHEBI:32551"/>
    </reaction>
</comment>
<comment type="catalytic activity">
    <reaction evidence="8">
        <text>L-glutamate(out) = L-glutamate(in)</text>
        <dbReference type="Rhea" id="RHEA:66336"/>
        <dbReference type="ChEBI" id="CHEBI:29985"/>
    </reaction>
</comment>
<comment type="subunit">
    <text evidence="7 8 9">Homotrimer (PubMed:35577074, PubMed:35943982). Part of a heterooligomeric complex resulting in the main assembly named S-layer deinoxanthin-binding complex (SDBC) which is composed of six different subunits, namely SlpA, DR_2310, DR_0505, DR_A0283, DR_A0282, and DR_A0281 (PubMed:32071085).</text>
</comment>
<comment type="subcellular location">
    <subcellularLocation>
        <location evidence="4">Cell envelope</location>
    </subcellularLocation>
    <subcellularLocation>
        <location evidence="9 15">Cell outer membrane</location>
        <topology evidence="8 9">Multi-pass membrane protein</topology>
    </subcellularLocation>
</comment>
<comment type="domain">
    <text evidence="8 9">The structure is characterized by a pore region with a massive beta-barrel organization which is embedded in the outer membrane and shows some protrusions into the S-layer, a stalk region consisting of a trimeric coiled coil, and a collar region at the base of the stalk (PubMed:35577074). More precisely, SlpA exhibits a tripartite organization, with its C-terminal part forming a homotrimeric 30-stranded OM beta-barrel (OMBB), its central part forming a long trimeric coiled coil that can traverse the large periplasmic space, and the extreme N-terminal part forming an SLH domain trimer that can interact with the PG layer (PubMed:35943982).</text>
</comment>
<comment type="disruption phenotype">
    <text evidence="3 6 9">Deletion causes substantial alterations in cell envelope structure, and a significant defect in resistance to solvent and shear stresses. Mutants shed exterior layers of the cellular envelope (PubMed:16946272). Deletion mutants show a significant decrease of the UV resistance, especially under desiccation conditions (PubMed:26909071). Deletions mutants show large disruptions in the OM, but the S-layer is unchanged compared to wild-type cells (PubMed:35943982).</text>
</comment>
<comment type="miscellaneous">
    <text evidence="9">D.radiodurans possesses an atypical cell envelope comprising an inner membrane, a large periplasmic space with a thick peptidoglycan (PG) layer, and an outer membrane (OM) covered by a surface layer (S-layer).</text>
</comment>
<comment type="caution">
    <text evidence="9 13 14">Was originally thought to be a major constituent of the S-layer. However, structural and deletion mutant studies showed that SlpA is an outer membrane protein and is not an integral part of the S-layer (PubMed:35943982).</text>
</comment>
<reference key="1">
    <citation type="journal article" date="1999" name="Science">
        <title>Genome sequence of the radioresistant bacterium Deinococcus radiodurans R1.</title>
        <authorList>
            <person name="White O."/>
            <person name="Eisen J.A."/>
            <person name="Heidelberg J.F."/>
            <person name="Hickey E.K."/>
            <person name="Peterson J.D."/>
            <person name="Dodson R.J."/>
            <person name="Haft D.H."/>
            <person name="Gwinn M.L."/>
            <person name="Nelson W.C."/>
            <person name="Richardson D.L."/>
            <person name="Moffat K.S."/>
            <person name="Qin H."/>
            <person name="Jiang L."/>
            <person name="Pamphile W."/>
            <person name="Crosby M."/>
            <person name="Shen M."/>
            <person name="Vamathevan J.J."/>
            <person name="Lam P."/>
            <person name="McDonald L.A."/>
            <person name="Utterback T.R."/>
            <person name="Zalewski C."/>
            <person name="Makarova K.S."/>
            <person name="Aravind L."/>
            <person name="Daly M.J."/>
            <person name="Minton K.W."/>
            <person name="Fleischmann R.D."/>
            <person name="Ketchum K.A."/>
            <person name="Nelson K.E."/>
            <person name="Salzberg S.L."/>
            <person name="Smith H.O."/>
            <person name="Venter J.C."/>
            <person name="Fraser C.M."/>
        </authorList>
    </citation>
    <scope>NUCLEOTIDE SEQUENCE [LARGE SCALE GENOMIC DNA]</scope>
    <source>
        <strain>ATCC 13939 / DSM 20539 / JCM 16871 / CCUG 27074 / LMG 4051 / NBRC 15346 / NCIMB 9279 / VKM B-1422 / R1</strain>
    </source>
</reference>
<reference key="2">
    <citation type="journal article" date="2006" name="Microbiology">
        <title>Involvement of the S-layer proteins Hpi and SlpA in the maintenance of cell envelope integrity in Deinococcus radiodurans R1.</title>
        <authorList>
            <person name="Rothfuss H."/>
            <person name="Lara J.C."/>
            <person name="Schmid A.K."/>
            <person name="Lidstrom M.E."/>
        </authorList>
    </citation>
    <scope>FUNCTION</scope>
    <scope>DISRUPTION PHENOTYPE</scope>
    <source>
        <strain>ATCC 13939 / DSM 20539 / JCM 16871 / CCUG 27074 / LMG 4051 / NBRC 15346 / NCIMB 9279 / VKM B-1422 / R1</strain>
    </source>
</reference>
<reference key="3">
    <citation type="journal article" date="2014" name="Biochim. Biophys. Acta">
        <title>New features of the cell wall of the radio-resistant bacterium Deinococcus radiodurans.</title>
        <authorList>
            <person name="Farci D."/>
            <person name="Bowler M.W."/>
            <person name="Kirkpatrick J."/>
            <person name="McSweeney S."/>
            <person name="Tramontano E."/>
            <person name="Piano D."/>
        </authorList>
    </citation>
    <scope>IDENTIFICATION BY MASS SPECTROMETRY</scope>
    <scope>SUBCELLULAR LOCATION</scope>
    <source>
        <strain>ATCC 13939 / DSM 20539 / JCM 16871 / CCUG 27074 / LMG 4051 / NBRC 15346 / NCIMB 9279 / VKM B-1422 / R1</strain>
    </source>
</reference>
<reference key="4">
    <citation type="journal article" date="2015" name="Front. Microbiol.">
        <title>Purification and characterization of DR_2577 (SlpA) a major S-layer protein from Deinococcus radiodurans.</title>
        <authorList>
            <person name="Farci D."/>
            <person name="Bowler M.W."/>
            <person name="Esposito F."/>
            <person name="McSweeney S."/>
            <person name="Tramontano E."/>
            <person name="Piano D."/>
        </authorList>
    </citation>
    <scope>FUNCTION</scope>
    <source>
        <strain>ATCC 13939 / DSM 20539 / JCM 16871 / CCUG 27074 / LMG 4051 / NBRC 15346 / NCIMB 9279 / VKM B-1422 / R1</strain>
    </source>
</reference>
<reference key="5">
    <citation type="journal article" date="2016" name="Front. Microbiol.">
        <title>The S-layer protein DR_2577 binds deinoxanthin and under desiccation conditions protects against UV-radiation in Deinococcus radiodurans.</title>
        <authorList>
            <person name="Farci D."/>
            <person name="Slavov C."/>
            <person name="Tramontano E."/>
            <person name="Piano D."/>
        </authorList>
    </citation>
    <scope>FUNCTION</scope>
    <scope>DEINOXANTHIN-BINDING</scope>
    <scope>DISRUPTION PHENOTYPE</scope>
    <source>
        <strain>ATCC 13939 / DSM 20539 / JCM 16871 / CCUG 27074 / LMG 4051 / NBRC 15346 / NCIMB 9279 / VKM B-1422 / R1</strain>
    </source>
</reference>
<reference key="6">
    <citation type="journal article" date="2020" name="J. Biol. Chem.">
        <title>Structural insights into the main S-layer unit of Deinococcus radiodurans reveal a massive protein complex with porin-like features.</title>
        <authorList>
            <person name="Farci D."/>
            <person name="Aksoyoglu M.A."/>
            <person name="Farci S.F."/>
            <person name="Bafna J.A."/>
            <person name="Bodrenko I."/>
            <person name="Ceccarelli M."/>
            <person name="Kirkpatrick J."/>
            <person name="Winterhalter M."/>
            <person name="Kereiche S."/>
            <person name="Piano D."/>
        </authorList>
    </citation>
    <scope>FUNCTION</scope>
    <scope>TRANSPORTER ACTIVITY</scope>
    <scope>SUBUNIT</scope>
    <scope>COMPOSITION OF THE SDBC COMPLEX</scope>
</reference>
<reference evidence="17 18" key="7">
    <citation type="journal article" date="2022" name="J. Biol. Chem.">
        <title>The cryo-EM structure of the S-layer deinoxanthin-binding complex of Deinococcus radiodurans informs properties of its environmental interactions.</title>
        <authorList>
            <person name="Farci D."/>
            <person name="Haniewicz P."/>
            <person name="de Sanctis D."/>
            <person name="Iesu L."/>
            <person name="Kereiche S."/>
            <person name="Winterhalter M."/>
            <person name="Piano D."/>
        </authorList>
    </citation>
    <scope>STRUCTURE BY ELECTRON MICROSCOPY (2.54 ANGSTROMS) OF APOPROTEIN AND COMPLEX WITH DEINOXANTHIN; SPECIFIC PHOSPHOGLYCOLIPIDS; FE(3+) AND CU(2+) IONS</scope>
    <scope>FUNCTION</scope>
    <scope>TRANSPORTER ACTIVITY</scope>
    <scope>DOMAIN</scope>
    <scope>SUBCELLULAR LOCATION</scope>
    <source>
        <strain>ATCC 13939 / DSM 20539 / JCM 16871 / CCUG 27074 / LMG 4051 / NBRC 15346 / NCIMB 9279 / VKM B-1422 / R1</strain>
    </source>
</reference>
<reference evidence="19" key="8">
    <citation type="journal article" date="2022" name="Proc. Natl. Acad. Sci. U.S.A.">
        <title>A multidomain connector links the outer membrane and cell wall in phylogenetically deep-branching bacteria.</title>
        <authorList>
            <person name="von Kugelgen A."/>
            <person name="van Dorst S."/>
            <person name="Alva V."/>
            <person name="Bharat T.A.M."/>
        </authorList>
    </citation>
    <scope>STRUCTURE BY ELECTRON MICROSCOPY (3.25 ANGSTROMS)</scope>
    <scope>FUNCTION</scope>
    <scope>DOMAIN</scope>
    <scope>DISRUPTION PHENOTYPE</scope>
    <scope>SUBCELLULAR LOCATION</scope>
    <source>
        <strain>ATCC BAA-816 / USUHS</strain>
    </source>
</reference>
<gene>
    <name evidence="10" type="primary">slpA</name>
    <name evidence="16" type="ordered locus">DR_2577</name>
</gene>
<accession>Q9RRB6</accession>
<name>SLPA_DEIRA</name>
<dbReference type="EMBL" id="AE000513">
    <property type="protein sequence ID" value="AAF12114.1"/>
    <property type="molecule type" value="Genomic_DNA"/>
</dbReference>
<dbReference type="PIR" id="B75258">
    <property type="entry name" value="B75258"/>
</dbReference>
<dbReference type="RefSeq" id="NP_296297.1">
    <property type="nucleotide sequence ID" value="NC_001263.1"/>
</dbReference>
<dbReference type="RefSeq" id="WP_010889202.1">
    <property type="nucleotide sequence ID" value="NC_001263.1"/>
</dbReference>
<dbReference type="PDB" id="7ZGX">
    <property type="method" value="EM"/>
    <property type="resolution" value="2.88 A"/>
    <property type="chains" value="A/B/C=1-1167"/>
</dbReference>
<dbReference type="PDB" id="7ZGY">
    <property type="method" value="EM"/>
    <property type="resolution" value="2.54 A"/>
    <property type="chains" value="A/B/C=1-1167"/>
</dbReference>
<dbReference type="PDB" id="8ACQ">
    <property type="method" value="EM"/>
    <property type="resolution" value="2.54 A"/>
    <property type="chains" value="A/B/C=1-1167"/>
</dbReference>
<dbReference type="PDB" id="8AE1">
    <property type="method" value="EM"/>
    <property type="resolution" value="3.25 A"/>
    <property type="chains" value="A/B/C=1-1167"/>
</dbReference>
<dbReference type="PDB" id="8AGD">
    <property type="method" value="EM"/>
    <property type="resolution" value="3.50 A"/>
    <property type="chains" value="A/B/C=1-1167"/>
</dbReference>
<dbReference type="PDBsum" id="7ZGX"/>
<dbReference type="PDBsum" id="7ZGY"/>
<dbReference type="PDBsum" id="8ACQ"/>
<dbReference type="PDBsum" id="8AE1"/>
<dbReference type="PDBsum" id="8AGD"/>
<dbReference type="EMDB" id="EMD-14714"/>
<dbReference type="EMDB" id="EMD-14715"/>
<dbReference type="EMDB" id="EMD-15378"/>
<dbReference type="SMR" id="Q9RRB6"/>
<dbReference type="STRING" id="243230.DR_2577"/>
<dbReference type="PaxDb" id="243230-DR_2577"/>
<dbReference type="EnsemblBacteria" id="AAF12114">
    <property type="protein sequence ID" value="AAF12114"/>
    <property type="gene ID" value="DR_2577"/>
</dbReference>
<dbReference type="GeneID" id="69518828"/>
<dbReference type="KEGG" id="dra:DR_2577"/>
<dbReference type="PATRIC" id="fig|243230.17.peg.2823"/>
<dbReference type="eggNOG" id="COG3206">
    <property type="taxonomic scope" value="Bacteria"/>
</dbReference>
<dbReference type="HOGENOM" id="CLU_310736_0_0_0"/>
<dbReference type="InParanoid" id="Q9RRB6"/>
<dbReference type="OrthoDB" id="5845122at2"/>
<dbReference type="Proteomes" id="UP000002524">
    <property type="component" value="Chromosome 1"/>
</dbReference>
<dbReference type="GO" id="GO:0009279">
    <property type="term" value="C:cell outer membrane"/>
    <property type="evidence" value="ECO:0007669"/>
    <property type="project" value="UniProtKB-SubCell"/>
</dbReference>
<dbReference type="GO" id="GO:0046930">
    <property type="term" value="C:pore complex"/>
    <property type="evidence" value="ECO:0007669"/>
    <property type="project" value="UniProtKB-KW"/>
</dbReference>
<dbReference type="GO" id="GO:0008289">
    <property type="term" value="F:lipid binding"/>
    <property type="evidence" value="ECO:0007669"/>
    <property type="project" value="UniProtKB-KW"/>
</dbReference>
<dbReference type="GO" id="GO:0015288">
    <property type="term" value="F:porin activity"/>
    <property type="evidence" value="ECO:0007669"/>
    <property type="project" value="UniProtKB-KW"/>
</dbReference>
<dbReference type="GO" id="GO:0006811">
    <property type="term" value="P:monoatomic ion transport"/>
    <property type="evidence" value="ECO:0007669"/>
    <property type="project" value="UniProtKB-KW"/>
</dbReference>
<dbReference type="Gene3D" id="1.10.287.1490">
    <property type="match status" value="1"/>
</dbReference>
<dbReference type="InterPro" id="IPR051465">
    <property type="entry name" value="Cell_Envelope_Struct_Comp"/>
</dbReference>
<dbReference type="InterPro" id="IPR001119">
    <property type="entry name" value="SLH_dom"/>
</dbReference>
<dbReference type="InterPro" id="IPR048736">
    <property type="entry name" value="SlpA_C"/>
</dbReference>
<dbReference type="PANTHER" id="PTHR43308:SF1">
    <property type="entry name" value="OUTER MEMBRANE PROTEIN ALPHA"/>
    <property type="match status" value="1"/>
</dbReference>
<dbReference type="PANTHER" id="PTHR43308">
    <property type="entry name" value="OUTER MEMBRANE PROTEIN ALPHA-RELATED"/>
    <property type="match status" value="1"/>
</dbReference>
<dbReference type="Pfam" id="PF00395">
    <property type="entry name" value="SLH"/>
    <property type="match status" value="1"/>
</dbReference>
<dbReference type="Pfam" id="PF21620">
    <property type="entry name" value="SlpA_C"/>
    <property type="match status" value="1"/>
</dbReference>
<dbReference type="PROSITE" id="PS51272">
    <property type="entry name" value="SLH"/>
    <property type="match status" value="1"/>
</dbReference>
<protein>
    <recommendedName>
        <fullName evidence="11">Outer membrane protein SlpA</fullName>
    </recommendedName>
</protein>